<protein>
    <recommendedName>
        <fullName>6-phosphogluconate dehydrogenase, decarboxylating</fullName>
        <ecNumber>1.1.1.44</ecNumber>
    </recommendedName>
</protein>
<feature type="chain" id="PRO_0000090034" description="6-phosphogluconate dehydrogenase, decarboxylating">
    <location>
        <begin position="1" status="less than"/>
        <end position="445" status="greater than"/>
    </location>
</feature>
<feature type="active site" description="Proton acceptor" evidence="1">
    <location>
        <position position="172"/>
    </location>
</feature>
<feature type="active site" description="Proton donor" evidence="1">
    <location>
        <position position="179"/>
    </location>
</feature>
<feature type="binding site" evidence="1">
    <location>
        <begin position="1"/>
        <end position="4"/>
    </location>
    <ligand>
        <name>NADP(+)</name>
        <dbReference type="ChEBI" id="CHEBI:58349"/>
    </ligand>
</feature>
<feature type="binding site" evidence="1">
    <location>
        <begin position="22"/>
        <end position="24"/>
    </location>
    <ligand>
        <name>NADP(+)</name>
        <dbReference type="ChEBI" id="CHEBI:58349"/>
    </ligand>
</feature>
<feature type="binding site" evidence="1">
    <location>
        <begin position="63"/>
        <end position="65"/>
    </location>
    <ligand>
        <name>NADP(+)</name>
        <dbReference type="ChEBI" id="CHEBI:58349"/>
    </ligand>
</feature>
<feature type="binding site" evidence="1">
    <location>
        <position position="91"/>
    </location>
    <ligand>
        <name>NADP(+)</name>
        <dbReference type="ChEBI" id="CHEBI:58349"/>
    </ligand>
</feature>
<feature type="binding site" description="in other chain" evidence="1">
    <location>
        <position position="91"/>
    </location>
    <ligand>
        <name>substrate</name>
        <note>ligand shared between dimeric partners</note>
    </ligand>
</feature>
<feature type="binding site" description="in other chain" evidence="1">
    <location>
        <begin position="117"/>
        <end position="119"/>
    </location>
    <ligand>
        <name>substrate</name>
        <note>ligand shared between dimeric partners</note>
    </ligand>
</feature>
<feature type="binding site" description="in other chain" evidence="1">
    <location>
        <begin position="175"/>
        <end position="176"/>
    </location>
    <ligand>
        <name>substrate</name>
        <note>ligand shared between dimeric partners</note>
    </ligand>
</feature>
<feature type="binding site" description="in other chain" evidence="1">
    <location>
        <position position="180"/>
    </location>
    <ligand>
        <name>substrate</name>
        <note>ligand shared between dimeric partners</note>
    </ligand>
</feature>
<feature type="binding site" description="in other chain" evidence="1">
    <location>
        <position position="249"/>
    </location>
    <ligand>
        <name>substrate</name>
        <note>ligand shared between dimeric partners</note>
    </ligand>
</feature>
<feature type="binding site" description="in other chain" evidence="1">
    <location>
        <position position="276"/>
    </location>
    <ligand>
        <name>substrate</name>
        <note>ligand shared between dimeric partners</note>
    </ligand>
</feature>
<feature type="binding site" evidence="1">
    <location>
        <position position="434"/>
    </location>
    <ligand>
        <name>substrate</name>
        <note>ligand shared between dimeric partners</note>
    </ligand>
</feature>
<feature type="binding site" evidence="1">
    <location>
        <position position="440"/>
    </location>
    <ligand>
        <name>substrate</name>
        <note>ligand shared between dimeric partners</note>
    </ligand>
</feature>
<feature type="non-terminal residue">
    <location>
        <position position="1"/>
    </location>
</feature>
<feature type="non-terminal residue">
    <location>
        <position position="445"/>
    </location>
</feature>
<evidence type="ECO:0000250" key="1"/>
<evidence type="ECO:0000305" key="2"/>
<organism>
    <name type="scientific">Citrobacter amalonaticus</name>
    <dbReference type="NCBI Taxonomy" id="35703"/>
    <lineage>
        <taxon>Bacteria</taxon>
        <taxon>Pseudomonadati</taxon>
        <taxon>Pseudomonadota</taxon>
        <taxon>Gammaproteobacteria</taxon>
        <taxon>Enterobacterales</taxon>
        <taxon>Enterobacteriaceae</taxon>
        <taxon>Citrobacter</taxon>
    </lineage>
</organism>
<name>6PGD_CITAM</name>
<accession>P41581</accession>
<dbReference type="EC" id="1.1.1.44"/>
<dbReference type="EMBL" id="U14426">
    <property type="protein sequence ID" value="AAC43773.1"/>
    <property type="molecule type" value="Genomic_DNA"/>
</dbReference>
<dbReference type="PIR" id="I40629">
    <property type="entry name" value="I40629"/>
</dbReference>
<dbReference type="SMR" id="P41581"/>
<dbReference type="STRING" id="35703.AL524_11770"/>
<dbReference type="eggNOG" id="COG0362">
    <property type="taxonomic scope" value="Bacteria"/>
</dbReference>
<dbReference type="UniPathway" id="UPA00115">
    <property type="reaction ID" value="UER00410"/>
</dbReference>
<dbReference type="GO" id="GO:0050661">
    <property type="term" value="F:NADP binding"/>
    <property type="evidence" value="ECO:0007669"/>
    <property type="project" value="InterPro"/>
</dbReference>
<dbReference type="GO" id="GO:0004616">
    <property type="term" value="F:phosphogluconate dehydrogenase (decarboxylating) activity"/>
    <property type="evidence" value="ECO:0000250"/>
    <property type="project" value="UniProtKB"/>
</dbReference>
<dbReference type="GO" id="GO:0019521">
    <property type="term" value="P:D-gluconate metabolic process"/>
    <property type="evidence" value="ECO:0007669"/>
    <property type="project" value="UniProtKB-KW"/>
</dbReference>
<dbReference type="GO" id="GO:0016054">
    <property type="term" value="P:organic acid catabolic process"/>
    <property type="evidence" value="ECO:0007669"/>
    <property type="project" value="UniProtKB-ARBA"/>
</dbReference>
<dbReference type="GO" id="GO:0006098">
    <property type="term" value="P:pentose-phosphate shunt"/>
    <property type="evidence" value="ECO:0000250"/>
    <property type="project" value="UniProtKB"/>
</dbReference>
<dbReference type="FunFam" id="1.10.1040.10:FF:000002">
    <property type="entry name" value="6-phosphogluconate dehydrogenase, decarboxylating"/>
    <property type="match status" value="1"/>
</dbReference>
<dbReference type="FunFam" id="3.40.50.720:FF:000007">
    <property type="entry name" value="6-phosphogluconate dehydrogenase, decarboxylating"/>
    <property type="match status" value="1"/>
</dbReference>
<dbReference type="Gene3D" id="1.20.5.320">
    <property type="entry name" value="6-Phosphogluconate Dehydrogenase, domain 3"/>
    <property type="match status" value="1"/>
</dbReference>
<dbReference type="Gene3D" id="1.10.1040.10">
    <property type="entry name" value="N-(1-d-carboxylethyl)-l-norvaline Dehydrogenase, domain 2"/>
    <property type="match status" value="1"/>
</dbReference>
<dbReference type="Gene3D" id="3.40.50.720">
    <property type="entry name" value="NAD(P)-binding Rossmann-like Domain"/>
    <property type="match status" value="1"/>
</dbReference>
<dbReference type="InterPro" id="IPR008927">
    <property type="entry name" value="6-PGluconate_DH-like_C_sf"/>
</dbReference>
<dbReference type="InterPro" id="IPR013328">
    <property type="entry name" value="6PGD_dom2"/>
</dbReference>
<dbReference type="InterPro" id="IPR006114">
    <property type="entry name" value="6PGDH_C"/>
</dbReference>
<dbReference type="InterPro" id="IPR006113">
    <property type="entry name" value="6PGDH_Gnd/GntZ"/>
</dbReference>
<dbReference type="InterPro" id="IPR006115">
    <property type="entry name" value="6PGDH_NADP-bd"/>
</dbReference>
<dbReference type="InterPro" id="IPR006184">
    <property type="entry name" value="6PGdom_BS"/>
</dbReference>
<dbReference type="InterPro" id="IPR036291">
    <property type="entry name" value="NAD(P)-bd_dom_sf"/>
</dbReference>
<dbReference type="InterPro" id="IPR006183">
    <property type="entry name" value="Pgluconate_DH"/>
</dbReference>
<dbReference type="NCBIfam" id="TIGR00873">
    <property type="entry name" value="gnd"/>
    <property type="match status" value="1"/>
</dbReference>
<dbReference type="NCBIfam" id="NF006765">
    <property type="entry name" value="PRK09287.1"/>
    <property type="match status" value="1"/>
</dbReference>
<dbReference type="PANTHER" id="PTHR11811">
    <property type="entry name" value="6-PHOSPHOGLUCONATE DEHYDROGENASE"/>
    <property type="match status" value="1"/>
</dbReference>
<dbReference type="Pfam" id="PF00393">
    <property type="entry name" value="6PGD"/>
    <property type="match status" value="1"/>
</dbReference>
<dbReference type="Pfam" id="PF03446">
    <property type="entry name" value="NAD_binding_2"/>
    <property type="match status" value="1"/>
</dbReference>
<dbReference type="PIRSF" id="PIRSF000109">
    <property type="entry name" value="6PGD"/>
    <property type="match status" value="1"/>
</dbReference>
<dbReference type="PRINTS" id="PR00076">
    <property type="entry name" value="6PGDHDRGNASE"/>
</dbReference>
<dbReference type="SMART" id="SM01350">
    <property type="entry name" value="6PGD"/>
    <property type="match status" value="1"/>
</dbReference>
<dbReference type="SUPFAM" id="SSF48179">
    <property type="entry name" value="6-phosphogluconate dehydrogenase C-terminal domain-like"/>
    <property type="match status" value="1"/>
</dbReference>
<dbReference type="SUPFAM" id="SSF51735">
    <property type="entry name" value="NAD(P)-binding Rossmann-fold domains"/>
    <property type="match status" value="1"/>
</dbReference>
<dbReference type="PROSITE" id="PS00461">
    <property type="entry name" value="6PGD"/>
    <property type="match status" value="1"/>
</dbReference>
<gene>
    <name type="primary">gnd</name>
</gene>
<reference key="1">
    <citation type="journal article" date="1994" name="Proc. Natl. Acad. Sci. U.S.A.">
        <title>Intergeneric transfer and recombination of the 6-phosphogluconate dehydrogenase gene (gnd) in enteric bacteria.</title>
        <authorList>
            <person name="Nelson K."/>
            <person name="Selander R.K."/>
        </authorList>
    </citation>
    <scope>NUCLEOTIDE SEQUENCE [GENOMIC DNA]</scope>
    <source>
        <strain>CT28</strain>
    </source>
</reference>
<sequence length="445" mass="48887">AVMGRNLALNIESRGYTVSVFNRSREKTEEVIAENPGKKLVPYYTVQEFVESLETPRRILLMVKAGAGTDSAIDSLKPYLDKGDIIIDGGNTFFQDTIRRNRELSEEGFNFIGTGVSGGEEGALKGPSIMPGGQKEAYELVAPILKQIAAVAEDGEPCVTYIGADGAGHYVKMVHNGIEYGDMQLIAEAYSLLKGGLNLSNEELATTFSEWNKGELSSYLIDITKDIFTKKDEEGKYLVDVILDEAANKGTGKWTSQSSLDLGEPLSLITESVFARYISSLKTQRVAASKVLTGPQAQPAGDKAEFIEKVRRALYLGKIVSYAQGFSQLRAASDEYNWDLNYGEIAKIFRAGCIIRAQFLQKITDAYAENPAIANLLLAPYFKQIADDYQQALRDVVSYAVQNGIPVPTFSAAVAYYDSYRAAVLPANLIQAQRDYFGAHTYKRT</sequence>
<proteinExistence type="inferred from homology"/>
<keyword id="KW-0311">Gluconate utilization</keyword>
<keyword id="KW-0521">NADP</keyword>
<keyword id="KW-0560">Oxidoreductase</keyword>
<keyword id="KW-0570">Pentose shunt</keyword>
<comment type="function">
    <text evidence="1">Catalyzes the oxidative decarboxylation of 6-phosphogluconate to ribulose 5-phosphate and CO(2), with concomitant reduction of NADP to NADPH.</text>
</comment>
<comment type="catalytic activity">
    <reaction>
        <text>6-phospho-D-gluconate + NADP(+) = D-ribulose 5-phosphate + CO2 + NADPH</text>
        <dbReference type="Rhea" id="RHEA:10116"/>
        <dbReference type="ChEBI" id="CHEBI:16526"/>
        <dbReference type="ChEBI" id="CHEBI:57783"/>
        <dbReference type="ChEBI" id="CHEBI:58121"/>
        <dbReference type="ChEBI" id="CHEBI:58349"/>
        <dbReference type="ChEBI" id="CHEBI:58759"/>
        <dbReference type="EC" id="1.1.1.44"/>
    </reaction>
</comment>
<comment type="pathway">
    <text>Carbohydrate degradation; pentose phosphate pathway; D-ribulose 5-phosphate from D-glucose 6-phosphate (oxidative stage): step 3/3.</text>
</comment>
<comment type="subunit">
    <text evidence="1">Homodimer.</text>
</comment>
<comment type="similarity">
    <text evidence="2">Belongs to the 6-phosphogluconate dehydrogenase family.</text>
</comment>